<protein>
    <recommendedName>
        <fullName evidence="1">Glutamate 5-kinase</fullName>
        <ecNumber evidence="1">2.7.2.11</ecNumber>
    </recommendedName>
    <alternativeName>
        <fullName evidence="1">Gamma-glutamyl kinase</fullName>
        <shortName evidence="1">GK</shortName>
    </alternativeName>
</protein>
<comment type="function">
    <text evidence="1">Catalyzes the transfer of a phosphate group to glutamate to form L-glutamate 5-phosphate.</text>
</comment>
<comment type="catalytic activity">
    <reaction evidence="1">
        <text>L-glutamate + ATP = L-glutamyl 5-phosphate + ADP</text>
        <dbReference type="Rhea" id="RHEA:14877"/>
        <dbReference type="ChEBI" id="CHEBI:29985"/>
        <dbReference type="ChEBI" id="CHEBI:30616"/>
        <dbReference type="ChEBI" id="CHEBI:58274"/>
        <dbReference type="ChEBI" id="CHEBI:456216"/>
        <dbReference type="EC" id="2.7.2.11"/>
    </reaction>
</comment>
<comment type="pathway">
    <text evidence="1">Amino-acid biosynthesis; L-proline biosynthesis; L-glutamate 5-semialdehyde from L-glutamate: step 1/2.</text>
</comment>
<comment type="subcellular location">
    <subcellularLocation>
        <location evidence="1">Cytoplasm</location>
    </subcellularLocation>
</comment>
<comment type="similarity">
    <text evidence="1">Belongs to the glutamate 5-kinase family.</text>
</comment>
<reference key="1">
    <citation type="submission" date="2005-07" db="EMBL/GenBank/DDBJ databases">
        <title>Complete sequence of Synechococcus sp. CC9605.</title>
        <authorList>
            <consortium name="US DOE Joint Genome Institute"/>
            <person name="Copeland A."/>
            <person name="Lucas S."/>
            <person name="Lapidus A."/>
            <person name="Barry K."/>
            <person name="Detter J.C."/>
            <person name="Glavina T."/>
            <person name="Hammon N."/>
            <person name="Israni S."/>
            <person name="Pitluck S."/>
            <person name="Schmutz J."/>
            <person name="Martinez M."/>
            <person name="Larimer F."/>
            <person name="Land M."/>
            <person name="Kyrpides N."/>
            <person name="Ivanova N."/>
            <person name="Richardson P."/>
        </authorList>
    </citation>
    <scope>NUCLEOTIDE SEQUENCE [LARGE SCALE GENOMIC DNA]</scope>
    <source>
        <strain>CC9605</strain>
    </source>
</reference>
<evidence type="ECO:0000255" key="1">
    <source>
        <dbReference type="HAMAP-Rule" id="MF_00456"/>
    </source>
</evidence>
<feature type="chain" id="PRO_0000253008" description="Glutamate 5-kinase">
    <location>
        <begin position="1"/>
        <end position="357"/>
    </location>
</feature>
<feature type="domain" description="PUA" evidence="1">
    <location>
        <begin position="270"/>
        <end position="353"/>
    </location>
</feature>
<feature type="binding site" evidence="1">
    <location>
        <position position="7"/>
    </location>
    <ligand>
        <name>ATP</name>
        <dbReference type="ChEBI" id="CHEBI:30616"/>
    </ligand>
</feature>
<feature type="binding site" evidence="1">
    <location>
        <position position="43"/>
    </location>
    <ligand>
        <name>substrate</name>
    </ligand>
</feature>
<feature type="binding site" evidence="1">
    <location>
        <position position="130"/>
    </location>
    <ligand>
        <name>substrate</name>
    </ligand>
</feature>
<feature type="binding site" evidence="1">
    <location>
        <position position="142"/>
    </location>
    <ligand>
        <name>substrate</name>
    </ligand>
</feature>
<feature type="binding site" evidence="1">
    <location>
        <begin position="162"/>
        <end position="163"/>
    </location>
    <ligand>
        <name>ATP</name>
        <dbReference type="ChEBI" id="CHEBI:30616"/>
    </ligand>
</feature>
<feature type="binding site" evidence="1">
    <location>
        <begin position="205"/>
        <end position="211"/>
    </location>
    <ligand>
        <name>ATP</name>
        <dbReference type="ChEBI" id="CHEBI:30616"/>
    </ligand>
</feature>
<sequence>MTLWVVKIGTSLLRGETATTIDGYARCFAGAMDRGDQVVLVTSGAVGLGCQKLALTNRPDTVVALQAAAAIGQGALMGLYERAMARHGRSVAQVLLTRSDLADRRRYQNASGTLRQLLSWGVLPVINENDALSPAELRFGDNDTLSALVAAAVEAQQLILLTDVDRLYSSDPRVDANAEPISDIRHPRELDSLEQGAGDGGRWGTGGMTTKLAAARIATASGITVQLADGRDPARLEALLQGQRGGTVFHPHPEPLGNRRSWLAHVLRPEGELQLDAGACAALQHRGASLLLVGVTAVRGDFAANQPIQLLDPDGEDLGRGLCSMDSDQLRAAMNDPSPGESSPVVVHRDGLVLRSR</sequence>
<dbReference type="EC" id="2.7.2.11" evidence="1"/>
<dbReference type="EMBL" id="CP000110">
    <property type="protein sequence ID" value="ABB35610.1"/>
    <property type="molecule type" value="Genomic_DNA"/>
</dbReference>
<dbReference type="RefSeq" id="WP_011364819.1">
    <property type="nucleotide sequence ID" value="NC_007516.1"/>
</dbReference>
<dbReference type="SMR" id="Q3AIH2"/>
<dbReference type="STRING" id="110662.Syncc9605_1867"/>
<dbReference type="KEGG" id="syd:Syncc9605_1867"/>
<dbReference type="eggNOG" id="COG0263">
    <property type="taxonomic scope" value="Bacteria"/>
</dbReference>
<dbReference type="HOGENOM" id="CLU_025400_2_0_3"/>
<dbReference type="OrthoDB" id="9804434at2"/>
<dbReference type="UniPathway" id="UPA00098">
    <property type="reaction ID" value="UER00359"/>
</dbReference>
<dbReference type="GO" id="GO:0005829">
    <property type="term" value="C:cytosol"/>
    <property type="evidence" value="ECO:0007669"/>
    <property type="project" value="TreeGrafter"/>
</dbReference>
<dbReference type="GO" id="GO:0005524">
    <property type="term" value="F:ATP binding"/>
    <property type="evidence" value="ECO:0007669"/>
    <property type="project" value="UniProtKB-KW"/>
</dbReference>
<dbReference type="GO" id="GO:0004349">
    <property type="term" value="F:glutamate 5-kinase activity"/>
    <property type="evidence" value="ECO:0007669"/>
    <property type="project" value="UniProtKB-UniRule"/>
</dbReference>
<dbReference type="GO" id="GO:0003723">
    <property type="term" value="F:RNA binding"/>
    <property type="evidence" value="ECO:0007669"/>
    <property type="project" value="InterPro"/>
</dbReference>
<dbReference type="GO" id="GO:0055129">
    <property type="term" value="P:L-proline biosynthetic process"/>
    <property type="evidence" value="ECO:0007669"/>
    <property type="project" value="UniProtKB-UniRule"/>
</dbReference>
<dbReference type="CDD" id="cd04242">
    <property type="entry name" value="AAK_G5K_ProB"/>
    <property type="match status" value="1"/>
</dbReference>
<dbReference type="CDD" id="cd21157">
    <property type="entry name" value="PUA_G5K"/>
    <property type="match status" value="1"/>
</dbReference>
<dbReference type="FunFam" id="3.40.1160.10:FF:000018">
    <property type="entry name" value="Glutamate 5-kinase"/>
    <property type="match status" value="1"/>
</dbReference>
<dbReference type="Gene3D" id="3.40.1160.10">
    <property type="entry name" value="Acetylglutamate kinase-like"/>
    <property type="match status" value="1"/>
</dbReference>
<dbReference type="Gene3D" id="2.30.130.10">
    <property type="entry name" value="PUA domain"/>
    <property type="match status" value="1"/>
</dbReference>
<dbReference type="HAMAP" id="MF_00456">
    <property type="entry name" value="ProB"/>
    <property type="match status" value="1"/>
</dbReference>
<dbReference type="InterPro" id="IPR036393">
    <property type="entry name" value="AceGlu_kinase-like_sf"/>
</dbReference>
<dbReference type="InterPro" id="IPR001048">
    <property type="entry name" value="Asp/Glu/Uridylate_kinase"/>
</dbReference>
<dbReference type="InterPro" id="IPR041739">
    <property type="entry name" value="G5K_ProB"/>
</dbReference>
<dbReference type="InterPro" id="IPR001057">
    <property type="entry name" value="Glu/AcGlu_kinase"/>
</dbReference>
<dbReference type="InterPro" id="IPR011529">
    <property type="entry name" value="Glu_5kinase"/>
</dbReference>
<dbReference type="InterPro" id="IPR005715">
    <property type="entry name" value="Glu_5kinase/COase_Synthase"/>
</dbReference>
<dbReference type="InterPro" id="IPR019797">
    <property type="entry name" value="Glutamate_5-kinase_CS"/>
</dbReference>
<dbReference type="InterPro" id="IPR002478">
    <property type="entry name" value="PUA"/>
</dbReference>
<dbReference type="InterPro" id="IPR015947">
    <property type="entry name" value="PUA-like_sf"/>
</dbReference>
<dbReference type="InterPro" id="IPR036974">
    <property type="entry name" value="PUA_sf"/>
</dbReference>
<dbReference type="NCBIfam" id="TIGR01027">
    <property type="entry name" value="proB"/>
    <property type="match status" value="1"/>
</dbReference>
<dbReference type="PANTHER" id="PTHR43654">
    <property type="entry name" value="GLUTAMATE 5-KINASE"/>
    <property type="match status" value="1"/>
</dbReference>
<dbReference type="PANTHER" id="PTHR43654:SF3">
    <property type="entry name" value="GLUTAMATE 5-KINASE"/>
    <property type="match status" value="1"/>
</dbReference>
<dbReference type="Pfam" id="PF00696">
    <property type="entry name" value="AA_kinase"/>
    <property type="match status" value="1"/>
</dbReference>
<dbReference type="Pfam" id="PF01472">
    <property type="entry name" value="PUA"/>
    <property type="match status" value="1"/>
</dbReference>
<dbReference type="PIRSF" id="PIRSF000729">
    <property type="entry name" value="GK"/>
    <property type="match status" value="1"/>
</dbReference>
<dbReference type="PRINTS" id="PR00474">
    <property type="entry name" value="GLU5KINASE"/>
</dbReference>
<dbReference type="SMART" id="SM00359">
    <property type="entry name" value="PUA"/>
    <property type="match status" value="1"/>
</dbReference>
<dbReference type="SUPFAM" id="SSF53633">
    <property type="entry name" value="Carbamate kinase-like"/>
    <property type="match status" value="1"/>
</dbReference>
<dbReference type="SUPFAM" id="SSF88697">
    <property type="entry name" value="PUA domain-like"/>
    <property type="match status" value="1"/>
</dbReference>
<dbReference type="PROSITE" id="PS00902">
    <property type="entry name" value="GLUTAMATE_5_KINASE"/>
    <property type="match status" value="1"/>
</dbReference>
<dbReference type="PROSITE" id="PS50890">
    <property type="entry name" value="PUA"/>
    <property type="match status" value="1"/>
</dbReference>
<organism>
    <name type="scientific">Synechococcus sp. (strain CC9605)</name>
    <dbReference type="NCBI Taxonomy" id="110662"/>
    <lineage>
        <taxon>Bacteria</taxon>
        <taxon>Bacillati</taxon>
        <taxon>Cyanobacteriota</taxon>
        <taxon>Cyanophyceae</taxon>
        <taxon>Synechococcales</taxon>
        <taxon>Synechococcaceae</taxon>
        <taxon>Synechococcus</taxon>
    </lineage>
</organism>
<gene>
    <name evidence="1" type="primary">proB</name>
    <name type="ordered locus">Syncc9605_1867</name>
</gene>
<proteinExistence type="inferred from homology"/>
<keyword id="KW-0028">Amino-acid biosynthesis</keyword>
<keyword id="KW-0067">ATP-binding</keyword>
<keyword id="KW-0963">Cytoplasm</keyword>
<keyword id="KW-0418">Kinase</keyword>
<keyword id="KW-0547">Nucleotide-binding</keyword>
<keyword id="KW-0641">Proline biosynthesis</keyword>
<keyword id="KW-0808">Transferase</keyword>
<name>PROB_SYNSC</name>
<accession>Q3AIH2</accession>